<feature type="chain" id="PRO_1000127301" description="Large ribosomal subunit protein bL35">
    <location>
        <begin position="1"/>
        <end position="64"/>
    </location>
</feature>
<proteinExistence type="inferred from homology"/>
<sequence>MPKVKTHSGAKKRFALTAKGKIKRKHAFKNHMLDKKQTKQKRRLTHTALVHKSDKSRIEKLLRI</sequence>
<accession>B3ERW0</accession>
<reference key="1">
    <citation type="journal article" date="2010" name="J. Bacteriol.">
        <title>The genome of the amoeba symbiont 'Candidatus Amoebophilus asiaticus' reveals common mechanisms for host cell interaction among amoeba-associated bacteria.</title>
        <authorList>
            <person name="Schmitz-Esser S."/>
            <person name="Tischler P."/>
            <person name="Arnold R."/>
            <person name="Montanaro J."/>
            <person name="Wagner M."/>
            <person name="Rattei T."/>
            <person name="Horn M."/>
        </authorList>
    </citation>
    <scope>NUCLEOTIDE SEQUENCE [LARGE SCALE GENOMIC DNA]</scope>
    <source>
        <strain>5a2</strain>
    </source>
</reference>
<protein>
    <recommendedName>
        <fullName evidence="1">Large ribosomal subunit protein bL35</fullName>
    </recommendedName>
    <alternativeName>
        <fullName evidence="2">50S ribosomal protein L35</fullName>
    </alternativeName>
</protein>
<keyword id="KW-1185">Reference proteome</keyword>
<keyword id="KW-0687">Ribonucleoprotein</keyword>
<keyword id="KW-0689">Ribosomal protein</keyword>
<name>RL35_AMOA5</name>
<gene>
    <name evidence="1" type="primary">rpmI</name>
    <name type="ordered locus">Aasi_0561</name>
</gene>
<comment type="similarity">
    <text evidence="1">Belongs to the bacterial ribosomal protein bL35 family.</text>
</comment>
<dbReference type="EMBL" id="CP001102">
    <property type="protein sequence ID" value="ACE05962.1"/>
    <property type="molecule type" value="Genomic_DNA"/>
</dbReference>
<dbReference type="RefSeq" id="WP_012472730.1">
    <property type="nucleotide sequence ID" value="NC_010830.1"/>
</dbReference>
<dbReference type="SMR" id="B3ERW0"/>
<dbReference type="STRING" id="452471.Aasi_0561"/>
<dbReference type="KEGG" id="aas:Aasi_0561"/>
<dbReference type="eggNOG" id="COG0291">
    <property type="taxonomic scope" value="Bacteria"/>
</dbReference>
<dbReference type="HOGENOM" id="CLU_169643_4_3_10"/>
<dbReference type="OrthoDB" id="47476at2"/>
<dbReference type="Proteomes" id="UP000001227">
    <property type="component" value="Chromosome"/>
</dbReference>
<dbReference type="GO" id="GO:0022625">
    <property type="term" value="C:cytosolic large ribosomal subunit"/>
    <property type="evidence" value="ECO:0007669"/>
    <property type="project" value="TreeGrafter"/>
</dbReference>
<dbReference type="GO" id="GO:0003735">
    <property type="term" value="F:structural constituent of ribosome"/>
    <property type="evidence" value="ECO:0007669"/>
    <property type="project" value="InterPro"/>
</dbReference>
<dbReference type="GO" id="GO:0006412">
    <property type="term" value="P:translation"/>
    <property type="evidence" value="ECO:0007669"/>
    <property type="project" value="UniProtKB-UniRule"/>
</dbReference>
<dbReference type="FunFam" id="4.10.410.60:FF:000001">
    <property type="entry name" value="50S ribosomal protein L35"/>
    <property type="match status" value="1"/>
</dbReference>
<dbReference type="Gene3D" id="4.10.410.60">
    <property type="match status" value="1"/>
</dbReference>
<dbReference type="HAMAP" id="MF_00514">
    <property type="entry name" value="Ribosomal_bL35"/>
    <property type="match status" value="1"/>
</dbReference>
<dbReference type="InterPro" id="IPR001706">
    <property type="entry name" value="Ribosomal_bL35"/>
</dbReference>
<dbReference type="InterPro" id="IPR021137">
    <property type="entry name" value="Ribosomal_bL35-like"/>
</dbReference>
<dbReference type="InterPro" id="IPR018265">
    <property type="entry name" value="Ribosomal_bL35_CS"/>
</dbReference>
<dbReference type="InterPro" id="IPR037229">
    <property type="entry name" value="Ribosomal_bL35_sf"/>
</dbReference>
<dbReference type="NCBIfam" id="TIGR00001">
    <property type="entry name" value="rpmI_bact"/>
    <property type="match status" value="1"/>
</dbReference>
<dbReference type="PANTHER" id="PTHR33343">
    <property type="entry name" value="54S RIBOSOMAL PROTEIN BL35M"/>
    <property type="match status" value="1"/>
</dbReference>
<dbReference type="PANTHER" id="PTHR33343:SF1">
    <property type="entry name" value="LARGE RIBOSOMAL SUBUNIT PROTEIN BL35M"/>
    <property type="match status" value="1"/>
</dbReference>
<dbReference type="Pfam" id="PF01632">
    <property type="entry name" value="Ribosomal_L35p"/>
    <property type="match status" value="1"/>
</dbReference>
<dbReference type="PRINTS" id="PR00064">
    <property type="entry name" value="RIBOSOMALL35"/>
</dbReference>
<dbReference type="SUPFAM" id="SSF143034">
    <property type="entry name" value="L35p-like"/>
    <property type="match status" value="1"/>
</dbReference>
<dbReference type="PROSITE" id="PS00936">
    <property type="entry name" value="RIBOSOMAL_L35"/>
    <property type="match status" value="1"/>
</dbReference>
<organism>
    <name type="scientific">Amoebophilus asiaticus (strain 5a2)</name>
    <dbReference type="NCBI Taxonomy" id="452471"/>
    <lineage>
        <taxon>Bacteria</taxon>
        <taxon>Pseudomonadati</taxon>
        <taxon>Bacteroidota</taxon>
        <taxon>Cytophagia</taxon>
        <taxon>Cytophagales</taxon>
        <taxon>Amoebophilaceae</taxon>
        <taxon>Candidatus Amoebophilus</taxon>
    </lineage>
</organism>
<evidence type="ECO:0000255" key="1">
    <source>
        <dbReference type="HAMAP-Rule" id="MF_00514"/>
    </source>
</evidence>
<evidence type="ECO:0000305" key="2"/>